<dbReference type="EC" id="3.4.17.-"/>
<dbReference type="EMBL" id="EQ963473">
    <property type="protein sequence ID" value="EED56471.1"/>
    <property type="molecule type" value="Genomic_DNA"/>
</dbReference>
<dbReference type="RefSeq" id="XP_002375253.1">
    <property type="nucleotide sequence ID" value="XM_002375212.1"/>
</dbReference>
<dbReference type="SMR" id="B8N4P0"/>
<dbReference type="STRING" id="332952.B8N4P0"/>
<dbReference type="EnsemblFungi" id="EED56471">
    <property type="protein sequence ID" value="EED56471"/>
    <property type="gene ID" value="AFLA_037450"/>
</dbReference>
<dbReference type="VEuPathDB" id="FungiDB:AFLA_001639"/>
<dbReference type="eggNOG" id="KOG2275">
    <property type="taxonomic scope" value="Eukaryota"/>
</dbReference>
<dbReference type="HOGENOM" id="CLU_021802_3_0_1"/>
<dbReference type="OMA" id="RLHKGVM"/>
<dbReference type="GO" id="GO:0005576">
    <property type="term" value="C:extracellular region"/>
    <property type="evidence" value="ECO:0007669"/>
    <property type="project" value="UniProtKB-SubCell"/>
</dbReference>
<dbReference type="GO" id="GO:0046872">
    <property type="term" value="F:metal ion binding"/>
    <property type="evidence" value="ECO:0007669"/>
    <property type="project" value="UniProtKB-KW"/>
</dbReference>
<dbReference type="GO" id="GO:0008233">
    <property type="term" value="F:peptidase activity"/>
    <property type="evidence" value="ECO:0007669"/>
    <property type="project" value="UniProtKB-KW"/>
</dbReference>
<dbReference type="GO" id="GO:0006508">
    <property type="term" value="P:proteolysis"/>
    <property type="evidence" value="ECO:0007669"/>
    <property type="project" value="UniProtKB-KW"/>
</dbReference>
<dbReference type="CDD" id="cd05652">
    <property type="entry name" value="M20_ArgE_DapE-like_fungal"/>
    <property type="match status" value="1"/>
</dbReference>
<dbReference type="Gene3D" id="3.30.70.360">
    <property type="match status" value="1"/>
</dbReference>
<dbReference type="Gene3D" id="3.40.630.10">
    <property type="entry name" value="Zn peptidases"/>
    <property type="match status" value="1"/>
</dbReference>
<dbReference type="InterPro" id="IPR001261">
    <property type="entry name" value="ArgE/DapE_CS"/>
</dbReference>
<dbReference type="InterPro" id="IPR036264">
    <property type="entry name" value="Bact_exopeptidase_dim_dom"/>
</dbReference>
<dbReference type="InterPro" id="IPR002933">
    <property type="entry name" value="Peptidase_M20"/>
</dbReference>
<dbReference type="InterPro" id="IPR011650">
    <property type="entry name" value="Peptidase_M20_dimer"/>
</dbReference>
<dbReference type="InterPro" id="IPR050072">
    <property type="entry name" value="Peptidase_M20A"/>
</dbReference>
<dbReference type="PANTHER" id="PTHR43808">
    <property type="entry name" value="ACETYLORNITHINE DEACETYLASE"/>
    <property type="match status" value="1"/>
</dbReference>
<dbReference type="PANTHER" id="PTHR43808:SF8">
    <property type="entry name" value="PEPTIDASE M20 DIMERISATION DOMAIN-CONTAINING PROTEIN"/>
    <property type="match status" value="1"/>
</dbReference>
<dbReference type="Pfam" id="PF07687">
    <property type="entry name" value="M20_dimer"/>
    <property type="match status" value="1"/>
</dbReference>
<dbReference type="Pfam" id="PF01546">
    <property type="entry name" value="Peptidase_M20"/>
    <property type="match status" value="1"/>
</dbReference>
<dbReference type="SUPFAM" id="SSF55031">
    <property type="entry name" value="Bacterial exopeptidase dimerisation domain"/>
    <property type="match status" value="1"/>
</dbReference>
<dbReference type="SUPFAM" id="SSF53187">
    <property type="entry name" value="Zn-dependent exopeptidases"/>
    <property type="match status" value="1"/>
</dbReference>
<dbReference type="PROSITE" id="PS00758">
    <property type="entry name" value="ARGE_DAPE_CPG2_1"/>
    <property type="match status" value="1"/>
</dbReference>
<dbReference type="PROSITE" id="PS00759">
    <property type="entry name" value="ARGE_DAPE_CPG2_2"/>
    <property type="match status" value="1"/>
</dbReference>
<feature type="signal peptide" evidence="2">
    <location>
        <begin position="1"/>
        <end position="16"/>
    </location>
</feature>
<feature type="chain" id="PRO_0000411244" description="Probable carboxypeptidase AFLA_037450">
    <location>
        <begin position="17"/>
        <end position="430"/>
    </location>
</feature>
<feature type="active site" description="Proton acceptor" evidence="1">
    <location>
        <position position="188"/>
    </location>
</feature>
<feature type="binding site" evidence="1">
    <location>
        <position position="156"/>
    </location>
    <ligand>
        <name>Zn(2+)</name>
        <dbReference type="ChEBI" id="CHEBI:29105"/>
        <label>1</label>
    </ligand>
</feature>
<feature type="binding site" evidence="1">
    <location>
        <position position="156"/>
    </location>
    <ligand>
        <name>Zn(2+)</name>
        <dbReference type="ChEBI" id="CHEBI:29105"/>
        <label>2</label>
    </ligand>
</feature>
<feature type="binding site" evidence="1">
    <location>
        <position position="189"/>
    </location>
    <ligand>
        <name>Zn(2+)</name>
        <dbReference type="ChEBI" id="CHEBI:29105"/>
        <label>1</label>
    </ligand>
</feature>
<feature type="glycosylation site" description="N-linked (GlcNAc...) asparagine" evidence="2">
    <location>
        <position position="84"/>
    </location>
</feature>
<feature type="glycosylation site" description="N-linked (GlcNAc...) asparagine" evidence="2">
    <location>
        <position position="285"/>
    </location>
</feature>
<comment type="cofactor">
    <cofactor evidence="1">
        <name>Zn(2+)</name>
        <dbReference type="ChEBI" id="CHEBI:29105"/>
    </cofactor>
    <text evidence="1">Binds 2 Zn(2+) ions per subunit.</text>
</comment>
<comment type="subcellular location">
    <subcellularLocation>
        <location evidence="3">Secreted</location>
    </subcellularLocation>
</comment>
<comment type="similarity">
    <text evidence="3">Belongs to the peptidase M20A family.</text>
</comment>
<proteinExistence type="inferred from homology"/>
<keyword id="KW-0325">Glycoprotein</keyword>
<keyword id="KW-0378">Hydrolase</keyword>
<keyword id="KW-0479">Metal-binding</keyword>
<keyword id="KW-0645">Protease</keyword>
<keyword id="KW-0964">Secreted</keyword>
<keyword id="KW-0732">Signal</keyword>
<keyword id="KW-0862">Zinc</keyword>
<evidence type="ECO:0000250" key="1"/>
<evidence type="ECO:0000255" key="2"/>
<evidence type="ECO:0000305" key="3"/>
<organism>
    <name type="scientific">Aspergillus flavus (strain ATCC 200026 / FGSC A1120 / IAM 13836 / NRRL 3357 / JCM 12722 / SRRC 167)</name>
    <dbReference type="NCBI Taxonomy" id="332952"/>
    <lineage>
        <taxon>Eukaryota</taxon>
        <taxon>Fungi</taxon>
        <taxon>Dikarya</taxon>
        <taxon>Ascomycota</taxon>
        <taxon>Pezizomycotina</taxon>
        <taxon>Eurotiomycetes</taxon>
        <taxon>Eurotiomycetidae</taxon>
        <taxon>Eurotiales</taxon>
        <taxon>Aspergillaceae</taxon>
        <taxon>Aspergillus</taxon>
        <taxon>Aspergillus subgen. Circumdati</taxon>
    </lineage>
</organism>
<sequence length="430" mass="45810">MKSIYSLVLCTALTAASPHPAFPQSPLGVPTTSSPSTGTFNSAEEVINASPFLSFHRDIVQIESISSNEHNVGEFIADFLRARNFTVIEQAVTSSSQRENQERFNVFAYPSSNTPEILITSHIDTVPPFIPYSLDTDSTTDNDPSTIRISGRGSVDAKGSVAAQIFAALDVLEQNPSAPLGLLFVVGEETGGDGMRAFSESSLNPAPSAFHTVIFGEPTELALVSGHKGMLGFEIVAKGHAAHSGYPWLGRSAISAVLPALSRVDQLGNIPADKGGLPSSPKYGNTTVNIGRVDAGVAANVVPATARADVAVRLAAGTPDEARDIVRRAVRDATDGNPDVYAEFNTRSEGYPPQDLDTDVDGFDITTVNYGTDVPNLQIHEREDGPVRRYLYGPGSIHVAHGDNEAITVGDLQEAVRGYRKLIEAALQRR</sequence>
<accession>B8N4P0</accession>
<reference key="1">
    <citation type="journal article" date="2015" name="Genome Announc.">
        <title>Genome sequence of Aspergillus flavus NRRL 3357, a strain that causes aflatoxin contamination of food and feed.</title>
        <authorList>
            <person name="Nierman W.C."/>
            <person name="Yu J."/>
            <person name="Fedorova-Abrams N.D."/>
            <person name="Losada L."/>
            <person name="Cleveland T.E."/>
            <person name="Bhatnagar D."/>
            <person name="Bennett J.W."/>
            <person name="Dean R."/>
            <person name="Payne G.A."/>
        </authorList>
    </citation>
    <scope>NUCLEOTIDE SEQUENCE [LARGE SCALE GENOMIC DNA]</scope>
    <source>
        <strain>ATCC 200026 / FGSC A1120 / IAM 13836 / NRRL 3357 / JCM 12722 / SRRC 167</strain>
    </source>
</reference>
<gene>
    <name type="ORF">AFLA_037450</name>
</gene>
<name>P20D2_ASPFN</name>
<protein>
    <recommendedName>
        <fullName>Probable carboxypeptidase AFLA_037450</fullName>
        <ecNumber>3.4.17.-</ecNumber>
    </recommendedName>
    <alternativeName>
        <fullName>Peptidase M20 domain-containing protein AFLA_037450</fullName>
    </alternativeName>
</protein>